<protein>
    <recommendedName>
        <fullName evidence="2">Photosystem I iron-sulfur center</fullName>
        <ecNumber evidence="2">1.97.1.12</ecNumber>
    </recommendedName>
    <alternativeName>
        <fullName evidence="2">9 kDa polypeptide</fullName>
    </alternativeName>
    <alternativeName>
        <fullName evidence="2">PSI-C</fullName>
    </alternativeName>
    <alternativeName>
        <fullName evidence="2">Photosystem I subunit VII</fullName>
    </alternativeName>
    <alternativeName>
        <fullName evidence="2">PsaC</fullName>
    </alternativeName>
</protein>
<feature type="initiator methionine" description="Removed" evidence="1">
    <location>
        <position position="1"/>
    </location>
</feature>
<feature type="chain" id="PRO_0000061972" description="Photosystem I iron-sulfur center">
    <location>
        <begin position="2"/>
        <end position="81"/>
    </location>
</feature>
<feature type="domain" description="4Fe-4S ferredoxin-type 1" evidence="2">
    <location>
        <begin position="2"/>
        <end position="31"/>
    </location>
</feature>
<feature type="domain" description="4Fe-4S ferredoxin-type 2" evidence="2">
    <location>
        <begin position="39"/>
        <end position="68"/>
    </location>
</feature>
<feature type="binding site" evidence="2">
    <location>
        <position position="11"/>
    </location>
    <ligand>
        <name>[4Fe-4S] cluster</name>
        <dbReference type="ChEBI" id="CHEBI:49883"/>
        <label>1</label>
    </ligand>
</feature>
<feature type="binding site" evidence="2">
    <location>
        <position position="14"/>
    </location>
    <ligand>
        <name>[4Fe-4S] cluster</name>
        <dbReference type="ChEBI" id="CHEBI:49883"/>
        <label>1</label>
    </ligand>
</feature>
<feature type="binding site" evidence="2">
    <location>
        <position position="17"/>
    </location>
    <ligand>
        <name>[4Fe-4S] cluster</name>
        <dbReference type="ChEBI" id="CHEBI:49883"/>
        <label>1</label>
    </ligand>
</feature>
<feature type="binding site" evidence="2">
    <location>
        <position position="21"/>
    </location>
    <ligand>
        <name>[4Fe-4S] cluster</name>
        <dbReference type="ChEBI" id="CHEBI:49883"/>
        <label>2</label>
    </ligand>
</feature>
<feature type="binding site" evidence="2">
    <location>
        <position position="48"/>
    </location>
    <ligand>
        <name>[4Fe-4S] cluster</name>
        <dbReference type="ChEBI" id="CHEBI:49883"/>
        <label>2</label>
    </ligand>
</feature>
<feature type="binding site" evidence="2">
    <location>
        <position position="51"/>
    </location>
    <ligand>
        <name>[4Fe-4S] cluster</name>
        <dbReference type="ChEBI" id="CHEBI:49883"/>
        <label>2</label>
    </ligand>
</feature>
<feature type="binding site" evidence="2">
    <location>
        <position position="54"/>
    </location>
    <ligand>
        <name>[4Fe-4S] cluster</name>
        <dbReference type="ChEBI" id="CHEBI:49883"/>
        <label>2</label>
    </ligand>
</feature>
<feature type="binding site" evidence="2">
    <location>
        <position position="58"/>
    </location>
    <ligand>
        <name>[4Fe-4S] cluster</name>
        <dbReference type="ChEBI" id="CHEBI:49883"/>
        <label>1</label>
    </ligand>
</feature>
<accession>Q7HKX2</accession>
<name>PSAC_CALFG</name>
<proteinExistence type="inferred from homology"/>
<geneLocation type="chloroplast"/>
<evidence type="ECO:0000250" key="1"/>
<evidence type="ECO:0000255" key="2">
    <source>
        <dbReference type="HAMAP-Rule" id="MF_01303"/>
    </source>
</evidence>
<comment type="function">
    <text evidence="2">Apoprotein for the two 4Fe-4S centers FA and FB of photosystem I (PSI); essential for photochemical activity. FB is the terminal electron acceptor of PSI, donating electrons to ferredoxin. The C-terminus interacts with PsaA/B/D and helps assemble the protein into the PSI complex. Required for binding of PsaD and PsaE to PSI. PSI is a plastocyanin-ferredoxin oxidoreductase, converting photonic excitation into a charge separation, which transfers an electron from the donor P700 chlorophyll pair to the spectroscopically characterized acceptors A0, A1, FX, FA and FB in turn.</text>
</comment>
<comment type="catalytic activity">
    <reaction evidence="2">
        <text>reduced [plastocyanin] + hnu + oxidized [2Fe-2S]-[ferredoxin] = oxidized [plastocyanin] + reduced [2Fe-2S]-[ferredoxin]</text>
        <dbReference type="Rhea" id="RHEA:30407"/>
        <dbReference type="Rhea" id="RHEA-COMP:10000"/>
        <dbReference type="Rhea" id="RHEA-COMP:10001"/>
        <dbReference type="Rhea" id="RHEA-COMP:10039"/>
        <dbReference type="Rhea" id="RHEA-COMP:10040"/>
        <dbReference type="ChEBI" id="CHEBI:29036"/>
        <dbReference type="ChEBI" id="CHEBI:30212"/>
        <dbReference type="ChEBI" id="CHEBI:33737"/>
        <dbReference type="ChEBI" id="CHEBI:33738"/>
        <dbReference type="ChEBI" id="CHEBI:49552"/>
        <dbReference type="EC" id="1.97.1.12"/>
    </reaction>
</comment>
<comment type="cofactor">
    <cofactor evidence="2">
        <name>[4Fe-4S] cluster</name>
        <dbReference type="ChEBI" id="CHEBI:49883"/>
    </cofactor>
    <text evidence="2">Binds 2 [4Fe-4S] clusters. Cluster 2 is most probably the spectroscopically characterized electron acceptor FA and cluster 1 is most probably FB.</text>
</comment>
<comment type="subunit">
    <text evidence="2">The eukaryotic PSI reaction center is composed of at least 11 subunits.</text>
</comment>
<comment type="subcellular location">
    <subcellularLocation>
        <location evidence="2">Plastid</location>
        <location evidence="2">Chloroplast thylakoid membrane</location>
        <topology evidence="2">Peripheral membrane protein</topology>
        <orientation evidence="2">Stromal side</orientation>
    </subcellularLocation>
</comment>
<dbReference type="EC" id="1.97.1.12" evidence="2"/>
<dbReference type="EMBL" id="AJ428413">
    <property type="protein sequence ID" value="CAD28773.1"/>
    <property type="molecule type" value="Genomic_DNA"/>
</dbReference>
<dbReference type="RefSeq" id="NP_862806.1">
    <property type="nucleotide sequence ID" value="NC_004993.1"/>
</dbReference>
<dbReference type="SMR" id="Q7HKX2"/>
<dbReference type="GeneID" id="2598002"/>
<dbReference type="GO" id="GO:0009535">
    <property type="term" value="C:chloroplast thylakoid membrane"/>
    <property type="evidence" value="ECO:0007669"/>
    <property type="project" value="UniProtKB-SubCell"/>
</dbReference>
<dbReference type="GO" id="GO:0009522">
    <property type="term" value="C:photosystem I"/>
    <property type="evidence" value="ECO:0007669"/>
    <property type="project" value="UniProtKB-KW"/>
</dbReference>
<dbReference type="GO" id="GO:0051539">
    <property type="term" value="F:4 iron, 4 sulfur cluster binding"/>
    <property type="evidence" value="ECO:0007669"/>
    <property type="project" value="UniProtKB-KW"/>
</dbReference>
<dbReference type="GO" id="GO:0009055">
    <property type="term" value="F:electron transfer activity"/>
    <property type="evidence" value="ECO:0007669"/>
    <property type="project" value="UniProtKB-UniRule"/>
</dbReference>
<dbReference type="GO" id="GO:0046872">
    <property type="term" value="F:metal ion binding"/>
    <property type="evidence" value="ECO:0007669"/>
    <property type="project" value="UniProtKB-KW"/>
</dbReference>
<dbReference type="GO" id="GO:0016491">
    <property type="term" value="F:oxidoreductase activity"/>
    <property type="evidence" value="ECO:0007669"/>
    <property type="project" value="UniProtKB-KW"/>
</dbReference>
<dbReference type="GO" id="GO:0009773">
    <property type="term" value="P:photosynthetic electron transport in photosystem I"/>
    <property type="evidence" value="ECO:0007669"/>
    <property type="project" value="InterPro"/>
</dbReference>
<dbReference type="FunFam" id="3.30.70.20:FF:000001">
    <property type="entry name" value="Photosystem I iron-sulfur center"/>
    <property type="match status" value="1"/>
</dbReference>
<dbReference type="Gene3D" id="3.30.70.20">
    <property type="match status" value="1"/>
</dbReference>
<dbReference type="HAMAP" id="MF_01303">
    <property type="entry name" value="PSI_PsaC"/>
    <property type="match status" value="1"/>
</dbReference>
<dbReference type="InterPro" id="IPR017896">
    <property type="entry name" value="4Fe4S_Fe-S-bd"/>
</dbReference>
<dbReference type="InterPro" id="IPR017900">
    <property type="entry name" value="4Fe4S_Fe_S_CS"/>
</dbReference>
<dbReference type="InterPro" id="IPR050157">
    <property type="entry name" value="PSI_iron-sulfur_center"/>
</dbReference>
<dbReference type="InterPro" id="IPR017491">
    <property type="entry name" value="PSI_PsaC"/>
</dbReference>
<dbReference type="NCBIfam" id="TIGR03048">
    <property type="entry name" value="PS_I_psaC"/>
    <property type="match status" value="1"/>
</dbReference>
<dbReference type="PANTHER" id="PTHR24960:SF79">
    <property type="entry name" value="PHOTOSYSTEM I IRON-SULFUR CENTER"/>
    <property type="match status" value="1"/>
</dbReference>
<dbReference type="PANTHER" id="PTHR24960">
    <property type="entry name" value="PHOTOSYSTEM I IRON-SULFUR CENTER-RELATED"/>
    <property type="match status" value="1"/>
</dbReference>
<dbReference type="Pfam" id="PF14697">
    <property type="entry name" value="Fer4_21"/>
    <property type="match status" value="1"/>
</dbReference>
<dbReference type="SUPFAM" id="SSF54862">
    <property type="entry name" value="4Fe-4S ferredoxins"/>
    <property type="match status" value="1"/>
</dbReference>
<dbReference type="PROSITE" id="PS00198">
    <property type="entry name" value="4FE4S_FER_1"/>
    <property type="match status" value="2"/>
</dbReference>
<dbReference type="PROSITE" id="PS51379">
    <property type="entry name" value="4FE4S_FER_2"/>
    <property type="match status" value="2"/>
</dbReference>
<keyword id="KW-0004">4Fe-4S</keyword>
<keyword id="KW-0150">Chloroplast</keyword>
<keyword id="KW-0249">Electron transport</keyword>
<keyword id="KW-0408">Iron</keyword>
<keyword id="KW-0411">Iron-sulfur</keyword>
<keyword id="KW-0472">Membrane</keyword>
<keyword id="KW-0479">Metal-binding</keyword>
<keyword id="KW-0560">Oxidoreductase</keyword>
<keyword id="KW-0602">Photosynthesis</keyword>
<keyword id="KW-0603">Photosystem I</keyword>
<keyword id="KW-0934">Plastid</keyword>
<keyword id="KW-0677">Repeat</keyword>
<keyword id="KW-0793">Thylakoid</keyword>
<keyword id="KW-0813">Transport</keyword>
<organism>
    <name type="scientific">Calycanthus floridus var. glaucus</name>
    <name type="common">Eastern sweetshrub</name>
    <name type="synonym">Calycanthus fertilis var. ferax</name>
    <dbReference type="NCBI Taxonomy" id="212734"/>
    <lineage>
        <taxon>Eukaryota</taxon>
        <taxon>Viridiplantae</taxon>
        <taxon>Streptophyta</taxon>
        <taxon>Embryophyta</taxon>
        <taxon>Tracheophyta</taxon>
        <taxon>Spermatophyta</taxon>
        <taxon>Magnoliopsida</taxon>
        <taxon>Magnoliidae</taxon>
        <taxon>Laurales</taxon>
        <taxon>Calycanthaceae</taxon>
        <taxon>Calycanthus</taxon>
    </lineage>
</organism>
<sequence>MSHSVKIYDTCIGCTQCVRACPTDVLEMIPWDGCKAKQIASAPRTEDCVGCKRCESACPTDFLSVRVYLWHETTRSMGLAY</sequence>
<reference key="1">
    <citation type="journal article" date="2003" name="Plant Syst. Evol.">
        <title>The chloroplast genome of the 'basal' angiosperm Calycanthus fertilis -- structural and phylogenetic analyses.</title>
        <authorList>
            <person name="Goremykin V."/>
            <person name="Hirsch-Ernst K.I."/>
            <person name="Woelfl S."/>
            <person name="Hellwig F.H."/>
        </authorList>
    </citation>
    <scope>NUCLEOTIDE SEQUENCE [LARGE SCALE GENOMIC DNA]</scope>
</reference>
<gene>
    <name evidence="2" type="primary">psaC</name>
</gene>